<organism>
    <name type="scientific">Escherichia coli O8 (strain IAI1)</name>
    <dbReference type="NCBI Taxonomy" id="585034"/>
    <lineage>
        <taxon>Bacteria</taxon>
        <taxon>Pseudomonadati</taxon>
        <taxon>Pseudomonadota</taxon>
        <taxon>Gammaproteobacteria</taxon>
        <taxon>Enterobacterales</taxon>
        <taxon>Enterobacteriaceae</taxon>
        <taxon>Escherichia</taxon>
    </lineage>
</organism>
<comment type="catalytic activity">
    <reaction evidence="1">
        <text>L-tryptophan + H2O = indole + pyruvate + NH4(+)</text>
        <dbReference type="Rhea" id="RHEA:19553"/>
        <dbReference type="ChEBI" id="CHEBI:15361"/>
        <dbReference type="ChEBI" id="CHEBI:15377"/>
        <dbReference type="ChEBI" id="CHEBI:16881"/>
        <dbReference type="ChEBI" id="CHEBI:28938"/>
        <dbReference type="ChEBI" id="CHEBI:57912"/>
        <dbReference type="EC" id="4.1.99.1"/>
    </reaction>
</comment>
<comment type="cofactor">
    <cofactor evidence="1">
        <name>pyridoxal 5'-phosphate</name>
        <dbReference type="ChEBI" id="CHEBI:597326"/>
    </cofactor>
</comment>
<comment type="pathway">
    <text evidence="1">Amino-acid degradation; L-tryptophan degradation via pyruvate pathway; indole and pyruvate from L-tryptophan: step 1/1.</text>
</comment>
<comment type="subunit">
    <text evidence="1">Homotetramer.</text>
</comment>
<comment type="similarity">
    <text evidence="1">Belongs to the beta-eliminating lyase family.</text>
</comment>
<feature type="chain" id="PRO_1000128909" description="Tryptophanase">
    <location>
        <begin position="1"/>
        <end position="471"/>
    </location>
</feature>
<feature type="modified residue" description="N6-acetyllysine" evidence="1">
    <location>
        <position position="5"/>
    </location>
</feature>
<feature type="modified residue" description="N6-acetyllysine" evidence="1">
    <location>
        <position position="115"/>
    </location>
</feature>
<feature type="modified residue" description="N6-acetyllysine" evidence="1">
    <location>
        <position position="156"/>
    </location>
</feature>
<feature type="modified residue" description="N6-(pyridoxal phosphate)lysine" evidence="1">
    <location>
        <position position="270"/>
    </location>
</feature>
<feature type="modified residue" description="N6-acetyllysine" evidence="1">
    <location>
        <position position="450"/>
    </location>
</feature>
<proteinExistence type="inferred from homology"/>
<sequence length="471" mass="52773">MENFKHLPEPFRIRVIEPVKRTTRAYREEAIIKSGMNPFLLDSEDVFIDLLTDSGTGAVTQSMQAAMMRGDEAYSGSRSYYALAESVKNIFGYQYTIPTHQGRGAEQIYIPVLIKKREQEKGLDRSKMVAFSNYFFDTTQGHSQINGCTVRNVYIKEAFDTGVRYDFKGNFDLEGLERGIEEVGPNNVPYIVATITSNSAGGQPVSLANLKAMYSIAKKYDIPVVMDSARFAENAYFIKQREAEYKDWTIEQITRETYKYADMLAMSAKKDAMVPMGGLLCMKDDSFFDVYTECRTLCVVQEGFPTYGGLEGGAMERLAVGLYDGMNLDWLAYRIAQVQYLVDGLEEIGVVCQQAGGHAAFVDAGKLLPHIPADQFPAQALACELYKVAGIRAVEIGSFLLGRDPKTGKQLPCPAELLRLTIPRATYTQTHMDFIIEAFKHVKENAANIKGLTFTYEPKVLRHFTAKLKEV</sequence>
<name>TNAA_ECO8A</name>
<reference key="1">
    <citation type="journal article" date="2009" name="PLoS Genet.">
        <title>Organised genome dynamics in the Escherichia coli species results in highly diverse adaptive paths.</title>
        <authorList>
            <person name="Touchon M."/>
            <person name="Hoede C."/>
            <person name="Tenaillon O."/>
            <person name="Barbe V."/>
            <person name="Baeriswyl S."/>
            <person name="Bidet P."/>
            <person name="Bingen E."/>
            <person name="Bonacorsi S."/>
            <person name="Bouchier C."/>
            <person name="Bouvet O."/>
            <person name="Calteau A."/>
            <person name="Chiapello H."/>
            <person name="Clermont O."/>
            <person name="Cruveiller S."/>
            <person name="Danchin A."/>
            <person name="Diard M."/>
            <person name="Dossat C."/>
            <person name="Karoui M.E."/>
            <person name="Frapy E."/>
            <person name="Garry L."/>
            <person name="Ghigo J.M."/>
            <person name="Gilles A.M."/>
            <person name="Johnson J."/>
            <person name="Le Bouguenec C."/>
            <person name="Lescat M."/>
            <person name="Mangenot S."/>
            <person name="Martinez-Jehanne V."/>
            <person name="Matic I."/>
            <person name="Nassif X."/>
            <person name="Oztas S."/>
            <person name="Petit M.A."/>
            <person name="Pichon C."/>
            <person name="Rouy Z."/>
            <person name="Ruf C.S."/>
            <person name="Schneider D."/>
            <person name="Tourret J."/>
            <person name="Vacherie B."/>
            <person name="Vallenet D."/>
            <person name="Medigue C."/>
            <person name="Rocha E.P.C."/>
            <person name="Denamur E."/>
        </authorList>
    </citation>
    <scope>NUCLEOTIDE SEQUENCE [LARGE SCALE GENOMIC DNA]</scope>
    <source>
        <strain>IAI1</strain>
    </source>
</reference>
<protein>
    <recommendedName>
        <fullName evidence="1">Tryptophanase</fullName>
        <ecNumber evidence="1">4.1.99.1</ecNumber>
    </recommendedName>
    <alternativeName>
        <fullName evidence="1">L-tryptophan indole-lyase</fullName>
        <shortName evidence="1">TNase</shortName>
    </alternativeName>
</protein>
<dbReference type="EC" id="4.1.99.1" evidence="1"/>
<dbReference type="EMBL" id="CU928160">
    <property type="protein sequence ID" value="CAR00682.1"/>
    <property type="molecule type" value="Genomic_DNA"/>
</dbReference>
<dbReference type="RefSeq" id="WP_001295247.1">
    <property type="nucleotide sequence ID" value="NC_011741.1"/>
</dbReference>
<dbReference type="SMR" id="B7M560"/>
<dbReference type="GeneID" id="75205423"/>
<dbReference type="KEGG" id="ecr:ECIAI1_3887"/>
<dbReference type="HOGENOM" id="CLU_047223_0_0_6"/>
<dbReference type="UniPathway" id="UPA00332">
    <property type="reaction ID" value="UER00452"/>
</dbReference>
<dbReference type="GO" id="GO:0009034">
    <property type="term" value="F:tryptophanase activity"/>
    <property type="evidence" value="ECO:0007669"/>
    <property type="project" value="UniProtKB-UniRule"/>
</dbReference>
<dbReference type="FunFam" id="3.40.640.10:FF:000039">
    <property type="entry name" value="Tryptophanase"/>
    <property type="match status" value="1"/>
</dbReference>
<dbReference type="Gene3D" id="3.90.1150.10">
    <property type="entry name" value="Aspartate Aminotransferase, domain 1"/>
    <property type="match status" value="1"/>
</dbReference>
<dbReference type="Gene3D" id="3.40.640.10">
    <property type="entry name" value="Type I PLP-dependent aspartate aminotransferase-like (Major domain)"/>
    <property type="match status" value="1"/>
</dbReference>
<dbReference type="HAMAP" id="MF_00544">
    <property type="entry name" value="Tryptophanase"/>
    <property type="match status" value="1"/>
</dbReference>
<dbReference type="InterPro" id="IPR001597">
    <property type="entry name" value="ArAA_b-elim_lyase/Thr_aldolase"/>
</dbReference>
<dbReference type="InterPro" id="IPR011166">
    <property type="entry name" value="Beta-eliminating_lyase"/>
</dbReference>
<dbReference type="InterPro" id="IPR015424">
    <property type="entry name" value="PyrdxlP-dep_Trfase"/>
</dbReference>
<dbReference type="InterPro" id="IPR015421">
    <property type="entry name" value="PyrdxlP-dep_Trfase_major"/>
</dbReference>
<dbReference type="InterPro" id="IPR015422">
    <property type="entry name" value="PyrdxlP-dep_Trfase_small"/>
</dbReference>
<dbReference type="InterPro" id="IPR013440">
    <property type="entry name" value="TNase"/>
</dbReference>
<dbReference type="InterPro" id="IPR018176">
    <property type="entry name" value="Tryptophanase_CS"/>
</dbReference>
<dbReference type="NCBIfam" id="NF009709">
    <property type="entry name" value="PRK13238.1"/>
    <property type="match status" value="1"/>
</dbReference>
<dbReference type="NCBIfam" id="TIGR02617">
    <property type="entry name" value="tnaA_trp_ase"/>
    <property type="match status" value="1"/>
</dbReference>
<dbReference type="PANTHER" id="PTHR32325">
    <property type="entry name" value="BETA-ELIMINATING LYASE-LIKE PROTEIN-RELATED"/>
    <property type="match status" value="1"/>
</dbReference>
<dbReference type="PANTHER" id="PTHR32325:SF4">
    <property type="entry name" value="TRYPTOPHANASE"/>
    <property type="match status" value="1"/>
</dbReference>
<dbReference type="Pfam" id="PF01212">
    <property type="entry name" value="Beta_elim_lyase"/>
    <property type="match status" value="1"/>
</dbReference>
<dbReference type="PIRSF" id="PIRSF001386">
    <property type="entry name" value="Trpase"/>
    <property type="match status" value="1"/>
</dbReference>
<dbReference type="SUPFAM" id="SSF53383">
    <property type="entry name" value="PLP-dependent transferases"/>
    <property type="match status" value="1"/>
</dbReference>
<dbReference type="PROSITE" id="PS00853">
    <property type="entry name" value="BETA_ELIM_LYASE"/>
    <property type="match status" value="1"/>
</dbReference>
<keyword id="KW-0007">Acetylation</keyword>
<keyword id="KW-0456">Lyase</keyword>
<keyword id="KW-0663">Pyridoxal phosphate</keyword>
<keyword id="KW-0823">Tryptophan catabolism</keyword>
<accession>B7M560</accession>
<evidence type="ECO:0000255" key="1">
    <source>
        <dbReference type="HAMAP-Rule" id="MF_00544"/>
    </source>
</evidence>
<gene>
    <name evidence="1" type="primary">tnaA</name>
    <name type="ordered locus">ECIAI1_3887</name>
</gene>